<keyword id="KW-0002">3D-structure</keyword>
<keyword id="KW-1015">Disulfide bond</keyword>
<keyword id="KW-0235">DNA replication</keyword>
<keyword id="KW-0238">DNA-binding</keyword>
<keyword id="KW-0239">DNA-directed DNA polymerase</keyword>
<keyword id="KW-0269">Exonuclease</keyword>
<keyword id="KW-0378">Hydrolase</keyword>
<keyword id="KW-0460">Magnesium</keyword>
<keyword id="KW-0479">Metal-binding</keyword>
<keyword id="KW-0511">Multifunctional enzyme</keyword>
<keyword id="KW-0540">Nuclease</keyword>
<keyword id="KW-0548">Nucleotidyltransferase</keyword>
<keyword id="KW-0808">Transferase</keyword>
<proteinExistence type="evidence at protein level"/>
<accession>Q7SIG7</accession>
<accession>Q7SIG8</accession>
<protein>
    <recommendedName>
        <fullName>DNA polymerase</fullName>
        <ecNumber>2.7.7.7</ecNumber>
    </recommendedName>
    <alternativeName>
        <fullName>D Tok Pol</fullName>
    </alternativeName>
</protein>
<dbReference type="EC" id="2.7.7.7"/>
<dbReference type="PDB" id="1D5A">
    <property type="method" value="X-ray"/>
    <property type="resolution" value="2.40 A"/>
    <property type="chains" value="A=1-756"/>
</dbReference>
<dbReference type="PDB" id="1QQC">
    <property type="method" value="X-ray"/>
    <property type="resolution" value="2.60 A"/>
    <property type="chains" value="A=1-773"/>
</dbReference>
<dbReference type="PDBsum" id="1D5A"/>
<dbReference type="PDBsum" id="1QQC"/>
<dbReference type="SMR" id="Q7SIG7"/>
<dbReference type="BRENDA" id="2.7.7.7">
    <property type="organism ID" value="1918"/>
</dbReference>
<dbReference type="EvolutionaryTrace" id="Q7SIG7"/>
<dbReference type="GO" id="GO:0003677">
    <property type="term" value="F:DNA binding"/>
    <property type="evidence" value="ECO:0007669"/>
    <property type="project" value="UniProtKB-KW"/>
</dbReference>
<dbReference type="GO" id="GO:0003887">
    <property type="term" value="F:DNA-directed DNA polymerase activity"/>
    <property type="evidence" value="ECO:0007669"/>
    <property type="project" value="UniProtKB-KW"/>
</dbReference>
<dbReference type="GO" id="GO:0004527">
    <property type="term" value="F:exonuclease activity"/>
    <property type="evidence" value="ECO:0007669"/>
    <property type="project" value="UniProtKB-KW"/>
</dbReference>
<dbReference type="GO" id="GO:0046872">
    <property type="term" value="F:metal ion binding"/>
    <property type="evidence" value="ECO:0007669"/>
    <property type="project" value="UniProtKB-KW"/>
</dbReference>
<dbReference type="GO" id="GO:0000166">
    <property type="term" value="F:nucleotide binding"/>
    <property type="evidence" value="ECO:0007669"/>
    <property type="project" value="InterPro"/>
</dbReference>
<dbReference type="GO" id="GO:0006261">
    <property type="term" value="P:DNA-templated DNA replication"/>
    <property type="evidence" value="ECO:0007669"/>
    <property type="project" value="TreeGrafter"/>
</dbReference>
<dbReference type="CDD" id="cd05780">
    <property type="entry name" value="DNA_polB_Kod1_like_exo"/>
    <property type="match status" value="1"/>
</dbReference>
<dbReference type="CDD" id="cd05536">
    <property type="entry name" value="POLBc_B3"/>
    <property type="match status" value="1"/>
</dbReference>
<dbReference type="FunFam" id="3.30.342.10:FF:000015">
    <property type="entry name" value="DNA polymerase"/>
    <property type="match status" value="1"/>
</dbReference>
<dbReference type="FunFam" id="1.10.132.60:FF:000013">
    <property type="entry name" value="DNA polymerase Pol2"/>
    <property type="match status" value="1"/>
</dbReference>
<dbReference type="Gene3D" id="1.10.132.60">
    <property type="entry name" value="DNA polymerase family B, C-terminal domain"/>
    <property type="match status" value="1"/>
</dbReference>
<dbReference type="Gene3D" id="3.30.342.10">
    <property type="entry name" value="DNA Polymerase, chain B, domain 1"/>
    <property type="match status" value="1"/>
</dbReference>
<dbReference type="Gene3D" id="1.10.287.690">
    <property type="entry name" value="Helix hairpin bin"/>
    <property type="match status" value="1"/>
</dbReference>
<dbReference type="Gene3D" id="3.90.1600.10">
    <property type="entry name" value="Palm domain of DNA polymerase"/>
    <property type="match status" value="1"/>
</dbReference>
<dbReference type="Gene3D" id="3.30.420.10">
    <property type="entry name" value="Ribonuclease H-like superfamily/Ribonuclease H"/>
    <property type="match status" value="1"/>
</dbReference>
<dbReference type="InterPro" id="IPR006172">
    <property type="entry name" value="DNA-dir_DNA_pol_B"/>
</dbReference>
<dbReference type="InterPro" id="IPR017964">
    <property type="entry name" value="DNA-dir_DNA_pol_B_CS"/>
</dbReference>
<dbReference type="InterPro" id="IPR006133">
    <property type="entry name" value="DNA-dir_DNA_pol_B_exonuc"/>
</dbReference>
<dbReference type="InterPro" id="IPR006134">
    <property type="entry name" value="DNA-dir_DNA_pol_B_multi_dom"/>
</dbReference>
<dbReference type="InterPro" id="IPR043502">
    <property type="entry name" value="DNA/RNA_pol_sf"/>
</dbReference>
<dbReference type="InterPro" id="IPR042087">
    <property type="entry name" value="DNA_pol_B_thumb"/>
</dbReference>
<dbReference type="InterPro" id="IPR023211">
    <property type="entry name" value="DNA_pol_palm_dom_sf"/>
</dbReference>
<dbReference type="InterPro" id="IPR050240">
    <property type="entry name" value="DNA_pol_type-B"/>
</dbReference>
<dbReference type="InterPro" id="IPR012337">
    <property type="entry name" value="RNaseH-like_sf"/>
</dbReference>
<dbReference type="InterPro" id="IPR036397">
    <property type="entry name" value="RNaseH_sf"/>
</dbReference>
<dbReference type="NCBIfam" id="TIGR00592">
    <property type="entry name" value="pol2"/>
    <property type="match status" value="2"/>
</dbReference>
<dbReference type="PANTHER" id="PTHR10322">
    <property type="entry name" value="DNA POLYMERASE CATALYTIC SUBUNIT"/>
    <property type="match status" value="1"/>
</dbReference>
<dbReference type="PANTHER" id="PTHR10322:SF23">
    <property type="entry name" value="DNA POLYMERASE DELTA CATALYTIC SUBUNIT"/>
    <property type="match status" value="1"/>
</dbReference>
<dbReference type="Pfam" id="PF00136">
    <property type="entry name" value="DNA_pol_B"/>
    <property type="match status" value="1"/>
</dbReference>
<dbReference type="Pfam" id="PF03104">
    <property type="entry name" value="DNA_pol_B_exo1"/>
    <property type="match status" value="1"/>
</dbReference>
<dbReference type="PRINTS" id="PR00106">
    <property type="entry name" value="DNAPOLB"/>
</dbReference>
<dbReference type="SMART" id="SM00486">
    <property type="entry name" value="POLBc"/>
    <property type="match status" value="1"/>
</dbReference>
<dbReference type="SUPFAM" id="SSF56672">
    <property type="entry name" value="DNA/RNA polymerases"/>
    <property type="match status" value="1"/>
</dbReference>
<dbReference type="SUPFAM" id="SSF53098">
    <property type="entry name" value="Ribonuclease H-like"/>
    <property type="match status" value="1"/>
</dbReference>
<dbReference type="PROSITE" id="PS00116">
    <property type="entry name" value="DNA_POLYMERASE_B"/>
    <property type="match status" value="1"/>
</dbReference>
<organism>
    <name type="scientific">Desulfurococcus sp. (strain Tok)</name>
    <dbReference type="NCBI Taxonomy" id="108142"/>
    <lineage>
        <taxon>Archaea</taxon>
        <taxon>Thermoproteota</taxon>
        <taxon>Thermoprotei</taxon>
        <taxon>Desulfurococcales</taxon>
        <taxon>Desulfurococcaceae</taxon>
        <taxon>Desulfurococcus</taxon>
    </lineage>
</organism>
<sequence>MILDADYITEDGKPVIRVFKKEKGEFKIDYDRDFEPYIYALLKDDSAIEDIKKITAERHGTTVRVTRAERVKKKFLGRPVEVWKLYFTHPQDVPAIRDKIREHPAVVDIYEYDIPFAKRYLIDRGLIPMEGDEELRMLAFDIETLYHEGEEFGEGPILMISYADEEGARVITWKNIDLPYVESVSTEKEMIKRFLKVIQEKDPDVLITYNGDNFDFAYLKKRSEMLGVKFILGRDGSEPKIQRMGDRFAVEVKGRIHFDLYPVIRRTINLPTYTLETVYEPVFGQPKEKVYAEEIARAWESGEGLERVARYSMEDAKATYELGKEFFPMEAQLSRLVGQSLWDVSRSSTGNLVEWFLLRKAYERNDVAPNKPDERELARRTESYAGGYVKEPEKGLWENIVYLDYKSLYPSIIITHNVSPDTLNREGCREYDVAPQVGHRFCKDFPGFIPSLLGDLLEERQKVKKKMKATVDPIERKLLDYRQRAIKILANSYYGYYAYANARWYCRECAESVTAWGRQYIETTMREIEEKFGFKVLYADTDGFFATIPGADAETVKNKAKEFLNYINPRLPGLLELEYEGFYRRGFFVTKKKYAVIDEEDKITTRGLEIVRRDWSEIAKETQARVLEAILKHGDVEEAVRIVKEVTEKLSRHEVPPEKLVIYEQITRDLRSYRATGPHVAVAKRLAARGIKIRPGTVISYIVLKGPGRVGDRAIPFDEFDPAKHRYDAEYYIENQVLPAVERILRAFGYRKEDLRYQKTKQAGLGAWLKPKT</sequence>
<gene>
    <name type="primary">pol</name>
</gene>
<feature type="chain" id="PRO_0000278146" description="DNA polymerase">
    <location>
        <begin position="1"/>
        <end position="773"/>
    </location>
</feature>
<feature type="region of interest" description="N-terminal domain" evidence="2">
    <location>
        <begin position="1"/>
        <end position="131"/>
    </location>
</feature>
<feature type="region of interest" description="Exonuclease domain" evidence="2">
    <location>
        <begin position="133"/>
        <end position="385"/>
    </location>
</feature>
<feature type="region of interest" description="Polymerase domain" evidence="2">
    <location>
        <begin position="390"/>
        <end position="773"/>
    </location>
</feature>
<feature type="binding site" evidence="2">
    <location>
        <position position="141"/>
    </location>
    <ligand>
        <name>Mg(2+)</name>
        <dbReference type="ChEBI" id="CHEBI:18420"/>
        <label>1</label>
    </ligand>
</feature>
<feature type="binding site" evidence="2">
    <location>
        <position position="141"/>
    </location>
    <ligand>
        <name>Mg(2+)</name>
        <dbReference type="ChEBI" id="CHEBI:18420"/>
        <label>2</label>
    </ligand>
</feature>
<feature type="binding site" evidence="2">
    <location>
        <position position="143"/>
    </location>
    <ligand>
        <name>Mg(2+)</name>
        <dbReference type="ChEBI" id="CHEBI:18420"/>
        <label>2</label>
    </ligand>
</feature>
<feature type="binding site" evidence="2">
    <location>
        <position position="315"/>
    </location>
    <ligand>
        <name>Mg(2+)</name>
        <dbReference type="ChEBI" id="CHEBI:18420"/>
        <label>1</label>
    </ligand>
</feature>
<feature type="binding site" evidence="2">
    <location>
        <position position="315"/>
    </location>
    <ligand>
        <name>Mg(2+)</name>
        <dbReference type="ChEBI" id="CHEBI:18420"/>
        <label>2</label>
    </ligand>
</feature>
<feature type="disulfide bond" evidence="2">
    <location>
        <begin position="428"/>
        <end position="442"/>
    </location>
</feature>
<feature type="disulfide bond" evidence="2">
    <location>
        <begin position="506"/>
        <end position="509"/>
    </location>
</feature>
<feature type="sequence conflict" description="In Ref. 2." evidence="4" ref="2">
    <original>YHEGEEFGE</original>
    <variation>AHAGAAAGA</variation>
    <location>
        <begin position="146"/>
        <end position="154"/>
    </location>
</feature>
<feature type="sequence conflict" description="In Ref. 2." evidence="4" ref="2">
    <original>K</original>
    <variation>A</variation>
    <location>
        <position position="287"/>
    </location>
</feature>
<feature type="sequence conflict" description="In Ref. 2." evidence="4" ref="2">
    <original>R</original>
    <variation>E</variation>
    <location>
        <position position="297"/>
    </location>
</feature>
<feature type="sequence conflict" description="In Ref. 2." evidence="4" ref="2">
    <original>E</original>
    <variation>A</variation>
    <location>
        <position position="300"/>
    </location>
</feature>
<feature type="sequence conflict" description="In Ref. 2." evidence="4" ref="2">
    <original>QITRDLRSYRAT</original>
    <variation>A</variation>
    <location>
        <begin position="665"/>
        <end position="676"/>
    </location>
</feature>
<feature type="sequence conflict" description="In Ref. 2." evidence="4" ref="2">
    <original>VAKRLAARGIKIRPG</original>
    <variation>AAA</variation>
    <location>
        <begin position="682"/>
        <end position="696"/>
    </location>
</feature>
<feature type="strand" evidence="6">
    <location>
        <begin position="2"/>
        <end position="10"/>
    </location>
</feature>
<feature type="strand" evidence="6">
    <location>
        <begin position="13"/>
        <end position="22"/>
    </location>
</feature>
<feature type="strand" evidence="6">
    <location>
        <begin position="25"/>
        <end position="31"/>
    </location>
</feature>
<feature type="strand" evidence="6">
    <location>
        <begin position="37"/>
        <end position="44"/>
    </location>
</feature>
<feature type="helix" evidence="7">
    <location>
        <begin position="45"/>
        <end position="47"/>
    </location>
</feature>
<feature type="turn" evidence="6">
    <location>
        <begin position="49"/>
        <end position="53"/>
    </location>
</feature>
<feature type="strand" evidence="6">
    <location>
        <begin position="55"/>
        <end position="58"/>
    </location>
</feature>
<feature type="strand" evidence="6">
    <location>
        <begin position="61"/>
        <end position="64"/>
    </location>
</feature>
<feature type="strand" evidence="6">
    <location>
        <begin position="67"/>
        <end position="86"/>
    </location>
</feature>
<feature type="helix" evidence="6">
    <location>
        <begin position="92"/>
        <end position="100"/>
    </location>
</feature>
<feature type="strand" evidence="6">
    <location>
        <begin position="106"/>
        <end position="111"/>
    </location>
</feature>
<feature type="helix" evidence="6">
    <location>
        <begin position="116"/>
        <end position="123"/>
    </location>
</feature>
<feature type="strand" evidence="6">
    <location>
        <begin position="137"/>
        <end position="143"/>
    </location>
</feature>
<feature type="strand" evidence="6">
    <location>
        <begin position="159"/>
        <end position="164"/>
    </location>
</feature>
<feature type="strand" evidence="6">
    <location>
        <begin position="167"/>
        <end position="174"/>
    </location>
</feature>
<feature type="strand" evidence="6">
    <location>
        <begin position="181"/>
        <end position="183"/>
    </location>
</feature>
<feature type="helix" evidence="6">
    <location>
        <begin position="187"/>
        <end position="201"/>
    </location>
</feature>
<feature type="strand" evidence="6">
    <location>
        <begin position="204"/>
        <end position="210"/>
    </location>
</feature>
<feature type="turn" evidence="6">
    <location>
        <begin position="211"/>
        <end position="214"/>
    </location>
</feature>
<feature type="helix" evidence="6">
    <location>
        <begin position="215"/>
        <end position="224"/>
    </location>
</feature>
<feature type="turn" evidence="6">
    <location>
        <begin position="225"/>
        <end position="227"/>
    </location>
</feature>
<feature type="strand" evidence="6">
    <location>
        <begin position="240"/>
        <end position="251"/>
    </location>
</feature>
<feature type="strand" evidence="6">
    <location>
        <begin position="255"/>
        <end position="259"/>
    </location>
</feature>
<feature type="helix" evidence="6">
    <location>
        <begin position="260"/>
        <end position="267"/>
    </location>
</feature>
<feature type="helix" evidence="6">
    <location>
        <begin position="275"/>
        <end position="282"/>
    </location>
</feature>
<feature type="helix" evidence="6">
    <location>
        <begin position="294"/>
        <end position="300"/>
    </location>
</feature>
<feature type="helix" evidence="6">
    <location>
        <begin position="302"/>
        <end position="305"/>
    </location>
</feature>
<feature type="helix" evidence="6">
    <location>
        <begin position="308"/>
        <end position="337"/>
    </location>
</feature>
<feature type="helix" evidence="6">
    <location>
        <begin position="341"/>
        <end position="344"/>
    </location>
</feature>
<feature type="helix" evidence="6">
    <location>
        <begin position="349"/>
        <end position="363"/>
    </location>
</feature>
<feature type="helix" evidence="6">
    <location>
        <begin position="374"/>
        <end position="380"/>
    </location>
</feature>
<feature type="strand" evidence="6">
    <location>
        <begin position="397"/>
        <end position="407"/>
    </location>
</feature>
<feature type="helix" evidence="6">
    <location>
        <begin position="408"/>
        <end position="415"/>
    </location>
</feature>
<feature type="helix" evidence="6">
    <location>
        <begin position="420"/>
        <end position="422"/>
    </location>
</feature>
<feature type="strand" evidence="6">
    <location>
        <begin position="429"/>
        <end position="433"/>
    </location>
</feature>
<feature type="turn" evidence="6">
    <location>
        <begin position="435"/>
        <end position="437"/>
    </location>
</feature>
<feature type="strand" evidence="6">
    <location>
        <begin position="440"/>
        <end position="442"/>
    </location>
</feature>
<feature type="helix" evidence="6">
    <location>
        <begin position="448"/>
        <end position="469"/>
    </location>
</feature>
<feature type="helix" evidence="6">
    <location>
        <begin position="473"/>
        <end position="490"/>
    </location>
</feature>
<feature type="helix" evidence="6">
    <location>
        <begin position="493"/>
        <end position="497"/>
    </location>
</feature>
<feature type="helix" evidence="6">
    <location>
        <begin position="507"/>
        <end position="532"/>
    </location>
</feature>
<feature type="strand" evidence="6">
    <location>
        <begin position="535"/>
        <end position="539"/>
    </location>
</feature>
<feature type="strand" evidence="6">
    <location>
        <begin position="541"/>
        <end position="547"/>
    </location>
</feature>
<feature type="helix" evidence="6">
    <location>
        <begin position="553"/>
        <end position="567"/>
    </location>
</feature>
<feature type="helix" evidence="6">
    <location>
        <begin position="568"/>
        <end position="570"/>
    </location>
</feature>
<feature type="strand" evidence="6">
    <location>
        <begin position="576"/>
        <end position="590"/>
    </location>
</feature>
<feature type="strand" evidence="6">
    <location>
        <begin position="593"/>
        <end position="597"/>
    </location>
</feature>
<feature type="strand" evidence="6">
    <location>
        <begin position="603"/>
        <end position="607"/>
    </location>
</feature>
<feature type="helix" evidence="6">
    <location>
        <begin position="617"/>
        <end position="631"/>
    </location>
</feature>
<feature type="helix" evidence="6">
    <location>
        <begin position="636"/>
        <end position="650"/>
    </location>
</feature>
<feature type="turn" evidence="6">
    <location>
        <begin position="651"/>
        <end position="653"/>
    </location>
</feature>
<feature type="helix" evidence="6">
    <location>
        <begin position="657"/>
        <end position="659"/>
    </location>
</feature>
<feature type="strand" evidence="6">
    <location>
        <begin position="662"/>
        <end position="664"/>
    </location>
</feature>
<feature type="helix" evidence="7">
    <location>
        <begin position="678"/>
        <end position="682"/>
    </location>
</feature>
<feature type="turn" evidence="7">
    <location>
        <begin position="687"/>
        <end position="690"/>
    </location>
</feature>
<feature type="strand" evidence="6">
    <location>
        <begin position="699"/>
        <end position="702"/>
    </location>
</feature>
<feature type="strand" evidence="6">
    <location>
        <begin position="709"/>
        <end position="711"/>
    </location>
</feature>
<feature type="strand" evidence="6">
    <location>
        <begin position="717"/>
        <end position="719"/>
    </location>
</feature>
<feature type="turn" evidence="6">
    <location>
        <begin position="722"/>
        <end position="724"/>
    </location>
</feature>
<feature type="turn" evidence="6">
    <location>
        <begin position="729"/>
        <end position="732"/>
    </location>
</feature>
<feature type="helix" evidence="6">
    <location>
        <begin position="733"/>
        <end position="737"/>
    </location>
</feature>
<feature type="helix" evidence="6">
    <location>
        <begin position="738"/>
        <end position="746"/>
    </location>
</feature>
<feature type="turn" evidence="6">
    <location>
        <begin position="747"/>
        <end position="749"/>
    </location>
</feature>
<feature type="helix" evidence="6">
    <location>
        <begin position="752"/>
        <end position="754"/>
    </location>
</feature>
<comment type="function">
    <text evidence="3">Thermostable DNA polymerase. In addition to polymerase activity, this DNA polymerase exhibits 3' to 5' exonuclease activity.</text>
</comment>
<comment type="catalytic activity">
    <reaction evidence="3">
        <text>DNA(n) + a 2'-deoxyribonucleoside 5'-triphosphate = DNA(n+1) + diphosphate</text>
        <dbReference type="Rhea" id="RHEA:22508"/>
        <dbReference type="Rhea" id="RHEA-COMP:17339"/>
        <dbReference type="Rhea" id="RHEA-COMP:17340"/>
        <dbReference type="ChEBI" id="CHEBI:33019"/>
        <dbReference type="ChEBI" id="CHEBI:61560"/>
        <dbReference type="ChEBI" id="CHEBI:173112"/>
        <dbReference type="EC" id="2.7.7.7"/>
    </reaction>
</comment>
<comment type="cofactor">
    <cofactor evidence="2">
        <name>Mg(2+)</name>
        <dbReference type="ChEBI" id="CHEBI:18420"/>
    </cofactor>
    <text evidence="2">Binds 2 magnesium ions.</text>
</comment>
<comment type="activity regulation">
    <text evidence="3">DNA polymerase activity strongly inhibited by uracil-containing oligonucleotides.</text>
</comment>
<comment type="similarity">
    <text evidence="1">Belongs to the DNA polymerase type-B family.</text>
</comment>
<comment type="caution">
    <text evidence="4">There are conflicts between the sequence shown here and that from PDB 1D5A.</text>
</comment>
<evidence type="ECO:0000255" key="1"/>
<evidence type="ECO:0000269" key="2">
    <source>
    </source>
</evidence>
<evidence type="ECO:0000269" key="3">
    <source>
    </source>
</evidence>
<evidence type="ECO:0000305" key="4"/>
<evidence type="ECO:0000312" key="5">
    <source>
        <dbReference type="PDB" id="1QQC"/>
    </source>
</evidence>
<evidence type="ECO:0007829" key="6">
    <source>
        <dbReference type="PDB" id="1D5A"/>
    </source>
</evidence>
<evidence type="ECO:0007829" key="7">
    <source>
        <dbReference type="PDB" id="1QQC"/>
    </source>
</evidence>
<reference evidence="4" key="1">
    <citation type="journal article" date="1996" name="J. Biol. Chem.">
        <title>Archaebacterial DNA polymerases tightly bind uracil-containing DNA.</title>
        <authorList>
            <person name="Lasken R.S."/>
            <person name="Schuster D.M."/>
            <person name="Rashtchian A."/>
        </authorList>
    </citation>
    <scope>FUNCTION</scope>
    <scope>ACTIVITY REGULATION</scope>
</reference>
<reference evidence="4 5" key="2">
    <citation type="journal article" date="1999" name="Structure">
        <title>Crystal structure of an archaebacterial DNA polymerase.</title>
        <authorList>
            <person name="Zhao Y."/>
            <person name="Jeruzalmi D."/>
            <person name="Moarefi I."/>
            <person name="Leighton L."/>
            <person name="Lasken R.S."/>
            <person name="Kuriyan J."/>
        </authorList>
    </citation>
    <scope>X-RAY CRYSTALLOGRAPHY (2.4 ANGSTROMS) IN COMPLEX WITH MAGNESIUM</scope>
    <scope>COFACTOR</scope>
    <scope>DISULFIDE BONDS</scope>
</reference>
<name>DPOL_DESST</name>